<accession>B4X640</accession>
<comment type="function">
    <text evidence="6">Seed storage protein.</text>
</comment>
<comment type="tissue specificity">
    <text evidence="3">Expressed in seed.</text>
</comment>
<comment type="developmental stage">
    <text evidence="3">Expressed during seed maturation.</text>
</comment>
<comment type="allergen">
    <text evidence="3">Causes an allergic reaction in human. Binds to IgE in 37% of the 19 patients tested allergic to pistachio and/or cashew. Cross-reacts with cashew allergen Ana o 1.</text>
</comment>
<comment type="similarity">
    <text evidence="5">Belongs to the 7S seed storage protein family.</text>
</comment>
<dbReference type="EMBL" id="EF116865">
    <property type="protein sequence ID" value="ABO36677.1"/>
    <property type="molecule type" value="mRNA"/>
</dbReference>
<dbReference type="PDB" id="7UV3">
    <property type="method" value="NMR"/>
    <property type="chains" value="A=26-71"/>
</dbReference>
<dbReference type="PDB" id="7UV4">
    <property type="method" value="NMR"/>
    <property type="chains" value="A=82-138"/>
</dbReference>
<dbReference type="PDBsum" id="7UV3"/>
<dbReference type="PDBsum" id="7UV4"/>
<dbReference type="SMR" id="B4X640"/>
<dbReference type="Allergome" id="3771">
    <property type="allergen name" value="Pis v 3"/>
</dbReference>
<dbReference type="Allergome" id="3772">
    <property type="allergen name" value="Pis v 3.0101"/>
</dbReference>
<dbReference type="GO" id="GO:0045735">
    <property type="term" value="F:nutrient reservoir activity"/>
    <property type="evidence" value="ECO:0007669"/>
    <property type="project" value="UniProtKB-KW"/>
</dbReference>
<dbReference type="CDD" id="cd02245">
    <property type="entry name" value="cupin_7S_vicilin-like_C"/>
    <property type="match status" value="1"/>
</dbReference>
<dbReference type="CDD" id="cd02244">
    <property type="entry name" value="cupin_7S_vicilin-like_N"/>
    <property type="match status" value="1"/>
</dbReference>
<dbReference type="Gene3D" id="6.10.250.1700">
    <property type="match status" value="1"/>
</dbReference>
<dbReference type="Gene3D" id="2.60.120.10">
    <property type="entry name" value="Jelly Rolls"/>
    <property type="match status" value="2"/>
</dbReference>
<dbReference type="InterPro" id="IPR006045">
    <property type="entry name" value="Cupin_1"/>
</dbReference>
<dbReference type="InterPro" id="IPR014710">
    <property type="entry name" value="RmlC-like_jellyroll"/>
</dbReference>
<dbReference type="InterPro" id="IPR011051">
    <property type="entry name" value="RmlC_Cupin_sf"/>
</dbReference>
<dbReference type="InterPro" id="IPR050253">
    <property type="entry name" value="Seed_Storage-Functional"/>
</dbReference>
<dbReference type="PANTHER" id="PTHR31189:SF13">
    <property type="entry name" value="CUPINCIN"/>
    <property type="match status" value="1"/>
</dbReference>
<dbReference type="PANTHER" id="PTHR31189">
    <property type="entry name" value="OS03G0336100 PROTEIN-RELATED"/>
    <property type="match status" value="1"/>
</dbReference>
<dbReference type="Pfam" id="PF00190">
    <property type="entry name" value="Cupin_1"/>
    <property type="match status" value="2"/>
</dbReference>
<dbReference type="SMART" id="SM00835">
    <property type="entry name" value="Cupin_1"/>
    <property type="match status" value="2"/>
</dbReference>
<dbReference type="SUPFAM" id="SSF51182">
    <property type="entry name" value="RmlC-like cupins"/>
    <property type="match status" value="2"/>
</dbReference>
<organism>
    <name type="scientific">Pistacia vera</name>
    <name type="common">Pistachio</name>
    <dbReference type="NCBI Taxonomy" id="55513"/>
    <lineage>
        <taxon>Eukaryota</taxon>
        <taxon>Viridiplantae</taxon>
        <taxon>Streptophyta</taxon>
        <taxon>Embryophyta</taxon>
        <taxon>Tracheophyta</taxon>
        <taxon>Spermatophyta</taxon>
        <taxon>Magnoliopsida</taxon>
        <taxon>eudicotyledons</taxon>
        <taxon>Gunneridae</taxon>
        <taxon>Pentapetalae</taxon>
        <taxon>rosids</taxon>
        <taxon>malvids</taxon>
        <taxon>Sapindales</taxon>
        <taxon>Anacardiaceae</taxon>
        <taxon>Pistacia</taxon>
    </lineage>
</organism>
<evidence type="ECO:0000255" key="1"/>
<evidence type="ECO:0000256" key="2">
    <source>
        <dbReference type="SAM" id="MobiDB-lite"/>
    </source>
</evidence>
<evidence type="ECO:0000269" key="3">
    <source>
    </source>
</evidence>
<evidence type="ECO:0000303" key="4">
    <source>
    </source>
</evidence>
<evidence type="ECO:0000305" key="5"/>
<evidence type="ECO:0000305" key="6">
    <source>
    </source>
</evidence>
<evidence type="ECO:0007829" key="7">
    <source>
        <dbReference type="PDB" id="7UV3"/>
    </source>
</evidence>
<evidence type="ECO:0007829" key="8">
    <source>
        <dbReference type="PDB" id="7UV4"/>
    </source>
</evidence>
<name>VCL_PISVE</name>
<sequence length="545" mass="62496">MGSRTKFCLTLFLVSVLILCAGLALAKTDPELKQCKHQCKVQRQYDEEQKEQCAKGCEKYYKEKKGREQEEEEEEEWGSGRGRGDEFSTHEPGEKRLSQCMKQCERQDGGQQKQLCRFRCQEKYKKERREHSYSRDEEEEEEGDEEQEEEDENPYVFEDEHFTTRVKTEQGKVVVLPKFTKRSKLLRGLEKYRLAFLVANPQAFVVPNHMDADSIFFVSWGRGTITKIRENKRESMNVKQGDIIRIRAGTPFYIVNTDENEKLYIVKLLQPVNLPGHYEVFHGPGGENPESFYRAFSREVLEAALKTPRDKLEKLFEKQDEGAIVKASKEQIRAMSRRGEGPSIWPFTGKSTGTFNLFKKDPSQSNNYGQLFESEFKDYPPLQELDIMVSYVNITKGGMSGPFYNSRATKIAIVVSGEGRLEIACPHLSSSKNSGQEKSGPSYKKLSSSIRTDSVFVVPAGHPFVTVASGNQNLEILCFEVNAEGNIRYTLAGKKNIIEVMEKEAKELAFKTKGEEVDKVFGKQDEEFFFQGPKWRQHQQGRADE</sequence>
<proteinExistence type="evidence at protein level"/>
<keyword id="KW-0002">3D-structure</keyword>
<keyword id="KW-0020">Allergen</keyword>
<keyword id="KW-0708">Seed storage protein</keyword>
<keyword id="KW-0732">Signal</keyword>
<keyword id="KW-0758">Storage protein</keyword>
<protein>
    <recommendedName>
        <fullName evidence="5">Vicilin Pis v 3.0101</fullName>
    </recommendedName>
    <alternativeName>
        <fullName evidence="4">7S globulin</fullName>
    </alternativeName>
    <alternativeName>
        <fullName evidence="5">7S seed storage protein</fullName>
    </alternativeName>
    <alternativeName>
        <fullName evidence="4">7S vicilin-like protein Pis v 3</fullName>
    </alternativeName>
    <alternativeName>
        <fullName evidence="4">Vicilin Pis v 3</fullName>
    </alternativeName>
    <allergenName evidence="5">Pis v 3.0101</allergenName>
</protein>
<feature type="signal peptide" evidence="1">
    <location>
        <begin position="1"/>
        <end position="25"/>
    </location>
</feature>
<feature type="chain" id="PRO_0000451871" description="Vicilin Pis v 3.0101" evidence="1">
    <location>
        <begin position="26"/>
        <end position="545"/>
    </location>
</feature>
<feature type="domain" description="Cupin type-1 2" evidence="1">
    <location>
        <begin position="354"/>
        <end position="517"/>
    </location>
</feature>
<feature type="region of interest" description="Disordered" evidence="2">
    <location>
        <begin position="62"/>
        <end position="93"/>
    </location>
</feature>
<feature type="region of interest" description="Disordered" evidence="2">
    <location>
        <begin position="129"/>
        <end position="154"/>
    </location>
</feature>
<feature type="compositionally biased region" description="Basic and acidic residues" evidence="2">
    <location>
        <begin position="82"/>
        <end position="93"/>
    </location>
</feature>
<feature type="compositionally biased region" description="Acidic residues" evidence="2">
    <location>
        <begin position="136"/>
        <end position="153"/>
    </location>
</feature>
<feature type="helix" evidence="7">
    <location>
        <begin position="32"/>
        <end position="41"/>
    </location>
</feature>
<feature type="helix" evidence="7">
    <location>
        <begin position="47"/>
        <end position="60"/>
    </location>
</feature>
<feature type="turn" evidence="7">
    <location>
        <begin position="61"/>
        <end position="63"/>
    </location>
</feature>
<feature type="strand" evidence="7">
    <location>
        <begin position="68"/>
        <end position="70"/>
    </location>
</feature>
<feature type="helix" evidence="8">
    <location>
        <begin position="94"/>
        <end position="106"/>
    </location>
</feature>
<feature type="helix" evidence="8">
    <location>
        <begin position="111"/>
        <end position="127"/>
    </location>
</feature>
<feature type="strand" evidence="8">
    <location>
        <begin position="136"/>
        <end position="138"/>
    </location>
</feature>
<reference key="1">
    <citation type="journal article" date="2008" name="Clin. Exp. Allergy">
        <title>Pistachio vicilin, Pis v 3, is immunoglobulin E-reactive and cross-reacts with the homologous cashew allergen, Ana o 1.</title>
        <authorList>
            <person name="Willison L.N."/>
            <person name="Tawde P."/>
            <person name="Robotham J.M."/>
            <person name="Penney R.M."/>
            <person name="Teuber S.S."/>
            <person name="Sathe S.K."/>
            <person name="Roux K.H."/>
        </authorList>
    </citation>
    <scope>NUCLEOTIDE SEQUENCE [MRNA]</scope>
    <scope>TISSUE SPECIFICITY</scope>
    <scope>DEVELOPMENTAL STAGE</scope>
    <scope>ALLERGEN</scope>
    <source>
        <tissue evidence="4">Seed</tissue>
    </source>
</reference>